<accession>A8H7D5</accession>
<organism>
    <name type="scientific">Shewanella pealeana (strain ATCC 700345 / ANG-SQ1)</name>
    <dbReference type="NCBI Taxonomy" id="398579"/>
    <lineage>
        <taxon>Bacteria</taxon>
        <taxon>Pseudomonadati</taxon>
        <taxon>Pseudomonadota</taxon>
        <taxon>Gammaproteobacteria</taxon>
        <taxon>Alteromonadales</taxon>
        <taxon>Shewanellaceae</taxon>
        <taxon>Shewanella</taxon>
    </lineage>
</organism>
<evidence type="ECO:0000255" key="1">
    <source>
        <dbReference type="HAMAP-Rule" id="MF_00206"/>
    </source>
</evidence>
<evidence type="ECO:0000255" key="2">
    <source>
        <dbReference type="PROSITE-ProRule" id="PRU01266"/>
    </source>
</evidence>
<proteinExistence type="inferred from homology"/>
<sequence>MNRPERLQPGVKLRDADKVSRIPVKVVPSERDTMLRKPDWLRVKLPASNQRITDIKQALRKNGLHSVCEEASCPNLSECFNHGTATFMILGAICTRRCPFCDVAHGRPLKPDAEEPKKLAQTIKDMKLKYVVITSVDRDDLRDGGAQHFADCIREIRLLNPEIKIETLVPDFRGRIDAALEILATEPPDVFNHNLETAPMHYRKARPGANYQWSLDLLKKFKERHPNIPTKSGLMMGLGETNEEIAQVLHDLRAHNVEMLTLGQYLQPSKFHLPVERYVSPAEFDELKELAESIGFTHAACGPLVRSSYHADLQAQGKEVK</sequence>
<dbReference type="EC" id="2.8.1.8" evidence="1"/>
<dbReference type="EMBL" id="CP000851">
    <property type="protein sequence ID" value="ABV88472.1"/>
    <property type="molecule type" value="Genomic_DNA"/>
</dbReference>
<dbReference type="RefSeq" id="WP_012156374.1">
    <property type="nucleotide sequence ID" value="NC_009901.1"/>
</dbReference>
<dbReference type="SMR" id="A8H7D5"/>
<dbReference type="STRING" id="398579.Spea_3156"/>
<dbReference type="KEGG" id="spl:Spea_3156"/>
<dbReference type="eggNOG" id="COG0320">
    <property type="taxonomic scope" value="Bacteria"/>
</dbReference>
<dbReference type="HOGENOM" id="CLU_033144_2_1_6"/>
<dbReference type="OrthoDB" id="9787898at2"/>
<dbReference type="UniPathway" id="UPA00538">
    <property type="reaction ID" value="UER00593"/>
</dbReference>
<dbReference type="Proteomes" id="UP000002608">
    <property type="component" value="Chromosome"/>
</dbReference>
<dbReference type="GO" id="GO:0005737">
    <property type="term" value="C:cytoplasm"/>
    <property type="evidence" value="ECO:0007669"/>
    <property type="project" value="UniProtKB-SubCell"/>
</dbReference>
<dbReference type="GO" id="GO:0051539">
    <property type="term" value="F:4 iron, 4 sulfur cluster binding"/>
    <property type="evidence" value="ECO:0007669"/>
    <property type="project" value="UniProtKB-UniRule"/>
</dbReference>
<dbReference type="GO" id="GO:0016992">
    <property type="term" value="F:lipoate synthase activity"/>
    <property type="evidence" value="ECO:0007669"/>
    <property type="project" value="UniProtKB-UniRule"/>
</dbReference>
<dbReference type="GO" id="GO:0046872">
    <property type="term" value="F:metal ion binding"/>
    <property type="evidence" value="ECO:0007669"/>
    <property type="project" value="UniProtKB-KW"/>
</dbReference>
<dbReference type="CDD" id="cd01335">
    <property type="entry name" value="Radical_SAM"/>
    <property type="match status" value="1"/>
</dbReference>
<dbReference type="FunFam" id="3.20.20.70:FF:000023">
    <property type="entry name" value="Lipoyl synthase"/>
    <property type="match status" value="1"/>
</dbReference>
<dbReference type="Gene3D" id="3.20.20.70">
    <property type="entry name" value="Aldolase class I"/>
    <property type="match status" value="1"/>
</dbReference>
<dbReference type="HAMAP" id="MF_00206">
    <property type="entry name" value="Lipoyl_synth"/>
    <property type="match status" value="1"/>
</dbReference>
<dbReference type="InterPro" id="IPR013785">
    <property type="entry name" value="Aldolase_TIM"/>
</dbReference>
<dbReference type="InterPro" id="IPR006638">
    <property type="entry name" value="Elp3/MiaA/NifB-like_rSAM"/>
</dbReference>
<dbReference type="InterPro" id="IPR031691">
    <property type="entry name" value="LIAS_N"/>
</dbReference>
<dbReference type="InterPro" id="IPR003698">
    <property type="entry name" value="Lipoyl_synth"/>
</dbReference>
<dbReference type="InterPro" id="IPR007197">
    <property type="entry name" value="rSAM"/>
</dbReference>
<dbReference type="NCBIfam" id="TIGR00510">
    <property type="entry name" value="lipA"/>
    <property type="match status" value="1"/>
</dbReference>
<dbReference type="NCBIfam" id="NF004019">
    <property type="entry name" value="PRK05481.1"/>
    <property type="match status" value="1"/>
</dbReference>
<dbReference type="NCBIfam" id="NF009544">
    <property type="entry name" value="PRK12928.1"/>
    <property type="match status" value="1"/>
</dbReference>
<dbReference type="PANTHER" id="PTHR10949">
    <property type="entry name" value="LIPOYL SYNTHASE"/>
    <property type="match status" value="1"/>
</dbReference>
<dbReference type="PANTHER" id="PTHR10949:SF0">
    <property type="entry name" value="LIPOYL SYNTHASE, MITOCHONDRIAL"/>
    <property type="match status" value="1"/>
</dbReference>
<dbReference type="Pfam" id="PF16881">
    <property type="entry name" value="LIAS_N"/>
    <property type="match status" value="1"/>
</dbReference>
<dbReference type="Pfam" id="PF04055">
    <property type="entry name" value="Radical_SAM"/>
    <property type="match status" value="1"/>
</dbReference>
<dbReference type="PIRSF" id="PIRSF005963">
    <property type="entry name" value="Lipoyl_synth"/>
    <property type="match status" value="1"/>
</dbReference>
<dbReference type="SFLD" id="SFLDF00271">
    <property type="entry name" value="lipoyl_synthase"/>
    <property type="match status" value="1"/>
</dbReference>
<dbReference type="SFLD" id="SFLDG01058">
    <property type="entry name" value="lipoyl_synthase_like"/>
    <property type="match status" value="1"/>
</dbReference>
<dbReference type="SMART" id="SM00729">
    <property type="entry name" value="Elp3"/>
    <property type="match status" value="1"/>
</dbReference>
<dbReference type="SUPFAM" id="SSF102114">
    <property type="entry name" value="Radical SAM enzymes"/>
    <property type="match status" value="1"/>
</dbReference>
<dbReference type="PROSITE" id="PS51918">
    <property type="entry name" value="RADICAL_SAM"/>
    <property type="match status" value="1"/>
</dbReference>
<protein>
    <recommendedName>
        <fullName evidence="1">Lipoyl synthase</fullName>
        <ecNumber evidence="1">2.8.1.8</ecNumber>
    </recommendedName>
    <alternativeName>
        <fullName evidence="1">Lip-syn</fullName>
        <shortName evidence="1">LS</shortName>
    </alternativeName>
    <alternativeName>
        <fullName evidence="1">Lipoate synthase</fullName>
    </alternativeName>
    <alternativeName>
        <fullName evidence="1">Lipoic acid synthase</fullName>
    </alternativeName>
    <alternativeName>
        <fullName evidence="1">Sulfur insertion protein LipA</fullName>
    </alternativeName>
</protein>
<feature type="chain" id="PRO_1000077969" description="Lipoyl synthase">
    <location>
        <begin position="1"/>
        <end position="321"/>
    </location>
</feature>
<feature type="domain" description="Radical SAM core" evidence="2">
    <location>
        <begin position="80"/>
        <end position="297"/>
    </location>
</feature>
<feature type="binding site" evidence="1">
    <location>
        <position position="68"/>
    </location>
    <ligand>
        <name>[4Fe-4S] cluster</name>
        <dbReference type="ChEBI" id="CHEBI:49883"/>
        <label>1</label>
    </ligand>
</feature>
<feature type="binding site" evidence="1">
    <location>
        <position position="73"/>
    </location>
    <ligand>
        <name>[4Fe-4S] cluster</name>
        <dbReference type="ChEBI" id="CHEBI:49883"/>
        <label>1</label>
    </ligand>
</feature>
<feature type="binding site" evidence="1">
    <location>
        <position position="79"/>
    </location>
    <ligand>
        <name>[4Fe-4S] cluster</name>
        <dbReference type="ChEBI" id="CHEBI:49883"/>
        <label>1</label>
    </ligand>
</feature>
<feature type="binding site" evidence="1">
    <location>
        <position position="94"/>
    </location>
    <ligand>
        <name>[4Fe-4S] cluster</name>
        <dbReference type="ChEBI" id="CHEBI:49883"/>
        <label>2</label>
        <note>4Fe-4S-S-AdoMet</note>
    </ligand>
</feature>
<feature type="binding site" evidence="1">
    <location>
        <position position="98"/>
    </location>
    <ligand>
        <name>[4Fe-4S] cluster</name>
        <dbReference type="ChEBI" id="CHEBI:49883"/>
        <label>2</label>
        <note>4Fe-4S-S-AdoMet</note>
    </ligand>
</feature>
<feature type="binding site" evidence="1">
    <location>
        <position position="101"/>
    </location>
    <ligand>
        <name>[4Fe-4S] cluster</name>
        <dbReference type="ChEBI" id="CHEBI:49883"/>
        <label>2</label>
        <note>4Fe-4S-S-AdoMet</note>
    </ligand>
</feature>
<feature type="binding site" evidence="1">
    <location>
        <position position="308"/>
    </location>
    <ligand>
        <name>[4Fe-4S] cluster</name>
        <dbReference type="ChEBI" id="CHEBI:49883"/>
        <label>1</label>
    </ligand>
</feature>
<comment type="function">
    <text evidence="1">Catalyzes the radical-mediated insertion of two sulfur atoms into the C-6 and C-8 positions of the octanoyl moiety bound to the lipoyl domains of lipoate-dependent enzymes, thereby converting the octanoylated domains into lipoylated derivatives.</text>
</comment>
<comment type="catalytic activity">
    <reaction evidence="1">
        <text>[[Fe-S] cluster scaffold protein carrying a second [4Fe-4S](2+) cluster] + N(6)-octanoyl-L-lysyl-[protein] + 2 oxidized [2Fe-2S]-[ferredoxin] + 2 S-adenosyl-L-methionine + 4 H(+) = [[Fe-S] cluster scaffold protein] + N(6)-[(R)-dihydrolipoyl]-L-lysyl-[protein] + 4 Fe(3+) + 2 hydrogen sulfide + 2 5'-deoxyadenosine + 2 L-methionine + 2 reduced [2Fe-2S]-[ferredoxin]</text>
        <dbReference type="Rhea" id="RHEA:16585"/>
        <dbReference type="Rhea" id="RHEA-COMP:9928"/>
        <dbReference type="Rhea" id="RHEA-COMP:10000"/>
        <dbReference type="Rhea" id="RHEA-COMP:10001"/>
        <dbReference type="Rhea" id="RHEA-COMP:10475"/>
        <dbReference type="Rhea" id="RHEA-COMP:14568"/>
        <dbReference type="Rhea" id="RHEA-COMP:14569"/>
        <dbReference type="ChEBI" id="CHEBI:15378"/>
        <dbReference type="ChEBI" id="CHEBI:17319"/>
        <dbReference type="ChEBI" id="CHEBI:29034"/>
        <dbReference type="ChEBI" id="CHEBI:29919"/>
        <dbReference type="ChEBI" id="CHEBI:33722"/>
        <dbReference type="ChEBI" id="CHEBI:33737"/>
        <dbReference type="ChEBI" id="CHEBI:33738"/>
        <dbReference type="ChEBI" id="CHEBI:57844"/>
        <dbReference type="ChEBI" id="CHEBI:59789"/>
        <dbReference type="ChEBI" id="CHEBI:78809"/>
        <dbReference type="ChEBI" id="CHEBI:83100"/>
        <dbReference type="EC" id="2.8.1.8"/>
    </reaction>
</comment>
<comment type="cofactor">
    <cofactor evidence="1">
        <name>[4Fe-4S] cluster</name>
        <dbReference type="ChEBI" id="CHEBI:49883"/>
    </cofactor>
    <text evidence="1">Binds 2 [4Fe-4S] clusters per subunit. One cluster is coordinated with 3 cysteines and an exchangeable S-adenosyl-L-methionine.</text>
</comment>
<comment type="pathway">
    <text evidence="1">Protein modification; protein lipoylation via endogenous pathway; protein N(6)-(lipoyl)lysine from octanoyl-[acyl-carrier-protein]: step 2/2.</text>
</comment>
<comment type="subcellular location">
    <subcellularLocation>
        <location evidence="1">Cytoplasm</location>
    </subcellularLocation>
</comment>
<comment type="similarity">
    <text evidence="1">Belongs to the radical SAM superfamily. Lipoyl synthase family.</text>
</comment>
<name>LIPA_SHEPA</name>
<reference key="1">
    <citation type="submission" date="2007-10" db="EMBL/GenBank/DDBJ databases">
        <title>Complete sequence of Shewanella pealeana ATCC 700345.</title>
        <authorList>
            <consortium name="US DOE Joint Genome Institute"/>
            <person name="Copeland A."/>
            <person name="Lucas S."/>
            <person name="Lapidus A."/>
            <person name="Barry K."/>
            <person name="Glavina del Rio T."/>
            <person name="Dalin E."/>
            <person name="Tice H."/>
            <person name="Pitluck S."/>
            <person name="Chertkov O."/>
            <person name="Brettin T."/>
            <person name="Bruce D."/>
            <person name="Detter J.C."/>
            <person name="Han C."/>
            <person name="Schmutz J."/>
            <person name="Larimer F."/>
            <person name="Land M."/>
            <person name="Hauser L."/>
            <person name="Kyrpides N."/>
            <person name="Kim E."/>
            <person name="Zhao J.-S.Z."/>
            <person name="Manno D."/>
            <person name="Hawari J."/>
            <person name="Richardson P."/>
        </authorList>
    </citation>
    <scope>NUCLEOTIDE SEQUENCE [LARGE SCALE GENOMIC DNA]</scope>
    <source>
        <strain>ATCC 700345 / ANG-SQ1</strain>
    </source>
</reference>
<gene>
    <name evidence="1" type="primary">lipA</name>
    <name type="ordered locus">Spea_3156</name>
</gene>
<keyword id="KW-0004">4Fe-4S</keyword>
<keyword id="KW-0963">Cytoplasm</keyword>
<keyword id="KW-0408">Iron</keyword>
<keyword id="KW-0411">Iron-sulfur</keyword>
<keyword id="KW-0479">Metal-binding</keyword>
<keyword id="KW-1185">Reference proteome</keyword>
<keyword id="KW-0949">S-adenosyl-L-methionine</keyword>
<keyword id="KW-0808">Transferase</keyword>